<protein>
    <recommendedName>
        <fullName evidence="1">3-phosphoshikimate 1-carboxyvinyltransferase</fullName>
        <ecNumber evidence="1">2.5.1.19</ecNumber>
    </recommendedName>
    <alternativeName>
        <fullName evidence="1">5-enolpyruvylshikimate-3-phosphate synthase</fullName>
        <shortName evidence="1">EPSP synthase</shortName>
        <shortName evidence="1">EPSPS</shortName>
    </alternativeName>
</protein>
<sequence>MQESLTLQPIKLINGTLNLPGSKSVSNRALLLAALSEGKTRLTNLLDSDDVRHMLTALAALGVEYHLSSDRTVCEITGLGGAFTASQPLELFLGNAGTAMRPLAAALCLTDGDIVLTGEPRMKERPIGHLVDALRQGGAKIDYLEQENYPPLRLHGGFQGGEISVDGSVSSQFLTALLMTAPLAAQDTQISIQGDLVSKPYIDITLHMMKAFGIEVRNENYQRFFVAGRQQYRSPGDYLVEGDASSASYFLAAAAIKGGVVRVTGVGRNSVQGDIRFADVLERMGAIVRWGEDYIECERGELHAIDMDMNHIPDAAMTIATAALFAQGGTTTLRNIYNWRVKETDRLAAMAIELRKVGAEVEEGNDYIRITPPAKLKAAEIGTYNDHRMAMCFSLVALSDTPVTILDPKCTAKTFPDYFEQLARLSELA</sequence>
<keyword id="KW-0028">Amino-acid biosynthesis</keyword>
<keyword id="KW-0057">Aromatic amino acid biosynthesis</keyword>
<keyword id="KW-0963">Cytoplasm</keyword>
<keyword id="KW-0808">Transferase</keyword>
<name>AROA_PECCP</name>
<proteinExistence type="inferred from homology"/>
<dbReference type="EC" id="2.5.1.19" evidence="1"/>
<dbReference type="EMBL" id="CP001657">
    <property type="protein sequence ID" value="ACT12774.1"/>
    <property type="molecule type" value="Genomic_DNA"/>
</dbReference>
<dbReference type="RefSeq" id="WP_015839986.1">
    <property type="nucleotide sequence ID" value="NC_012917.1"/>
</dbReference>
<dbReference type="SMR" id="C6DF65"/>
<dbReference type="STRING" id="561230.PC1_1733"/>
<dbReference type="KEGG" id="pct:PC1_1733"/>
<dbReference type="eggNOG" id="COG0128">
    <property type="taxonomic scope" value="Bacteria"/>
</dbReference>
<dbReference type="HOGENOM" id="CLU_024321_0_0_6"/>
<dbReference type="OrthoDB" id="9809920at2"/>
<dbReference type="UniPathway" id="UPA00053">
    <property type="reaction ID" value="UER00089"/>
</dbReference>
<dbReference type="Proteomes" id="UP000002736">
    <property type="component" value="Chromosome"/>
</dbReference>
<dbReference type="GO" id="GO:0005737">
    <property type="term" value="C:cytoplasm"/>
    <property type="evidence" value="ECO:0007669"/>
    <property type="project" value="UniProtKB-SubCell"/>
</dbReference>
<dbReference type="GO" id="GO:0003866">
    <property type="term" value="F:3-phosphoshikimate 1-carboxyvinyltransferase activity"/>
    <property type="evidence" value="ECO:0007669"/>
    <property type="project" value="UniProtKB-UniRule"/>
</dbReference>
<dbReference type="GO" id="GO:0008652">
    <property type="term" value="P:amino acid biosynthetic process"/>
    <property type="evidence" value="ECO:0007669"/>
    <property type="project" value="UniProtKB-KW"/>
</dbReference>
<dbReference type="GO" id="GO:0009073">
    <property type="term" value="P:aromatic amino acid family biosynthetic process"/>
    <property type="evidence" value="ECO:0007669"/>
    <property type="project" value="UniProtKB-KW"/>
</dbReference>
<dbReference type="GO" id="GO:0009423">
    <property type="term" value="P:chorismate biosynthetic process"/>
    <property type="evidence" value="ECO:0007669"/>
    <property type="project" value="UniProtKB-UniRule"/>
</dbReference>
<dbReference type="CDD" id="cd01556">
    <property type="entry name" value="EPSP_synthase"/>
    <property type="match status" value="1"/>
</dbReference>
<dbReference type="FunFam" id="3.65.10.10:FF:000003">
    <property type="entry name" value="3-phosphoshikimate 1-carboxyvinyltransferase"/>
    <property type="match status" value="1"/>
</dbReference>
<dbReference type="FunFam" id="3.65.10.10:FF:000004">
    <property type="entry name" value="3-phosphoshikimate 1-carboxyvinyltransferase"/>
    <property type="match status" value="1"/>
</dbReference>
<dbReference type="Gene3D" id="3.65.10.10">
    <property type="entry name" value="Enolpyruvate transferase domain"/>
    <property type="match status" value="2"/>
</dbReference>
<dbReference type="HAMAP" id="MF_00210">
    <property type="entry name" value="EPSP_synth"/>
    <property type="match status" value="1"/>
</dbReference>
<dbReference type="InterPro" id="IPR001986">
    <property type="entry name" value="Enolpyruvate_Tfrase_dom"/>
</dbReference>
<dbReference type="InterPro" id="IPR036968">
    <property type="entry name" value="Enolpyruvate_Tfrase_sf"/>
</dbReference>
<dbReference type="InterPro" id="IPR006264">
    <property type="entry name" value="EPSP_synthase"/>
</dbReference>
<dbReference type="InterPro" id="IPR023193">
    <property type="entry name" value="EPSP_synthase_CS"/>
</dbReference>
<dbReference type="InterPro" id="IPR013792">
    <property type="entry name" value="RNA3'P_cycl/enolpyr_Trfase_a/b"/>
</dbReference>
<dbReference type="NCBIfam" id="TIGR01356">
    <property type="entry name" value="aroA"/>
    <property type="match status" value="1"/>
</dbReference>
<dbReference type="PANTHER" id="PTHR21090">
    <property type="entry name" value="AROM/DEHYDROQUINATE SYNTHASE"/>
    <property type="match status" value="1"/>
</dbReference>
<dbReference type="PANTHER" id="PTHR21090:SF5">
    <property type="entry name" value="PENTAFUNCTIONAL AROM POLYPEPTIDE"/>
    <property type="match status" value="1"/>
</dbReference>
<dbReference type="Pfam" id="PF00275">
    <property type="entry name" value="EPSP_synthase"/>
    <property type="match status" value="1"/>
</dbReference>
<dbReference type="PIRSF" id="PIRSF000505">
    <property type="entry name" value="EPSPS"/>
    <property type="match status" value="1"/>
</dbReference>
<dbReference type="SUPFAM" id="SSF55205">
    <property type="entry name" value="EPT/RTPC-like"/>
    <property type="match status" value="1"/>
</dbReference>
<dbReference type="PROSITE" id="PS00104">
    <property type="entry name" value="EPSP_SYNTHASE_1"/>
    <property type="match status" value="1"/>
</dbReference>
<dbReference type="PROSITE" id="PS00885">
    <property type="entry name" value="EPSP_SYNTHASE_2"/>
    <property type="match status" value="1"/>
</dbReference>
<accession>C6DF65</accession>
<comment type="function">
    <text evidence="1">Catalyzes the transfer of the enolpyruvyl moiety of phosphoenolpyruvate (PEP) to the 5-hydroxyl of shikimate-3-phosphate (S3P) to produce enolpyruvyl shikimate-3-phosphate and inorganic phosphate.</text>
</comment>
<comment type="catalytic activity">
    <reaction evidence="1">
        <text>3-phosphoshikimate + phosphoenolpyruvate = 5-O-(1-carboxyvinyl)-3-phosphoshikimate + phosphate</text>
        <dbReference type="Rhea" id="RHEA:21256"/>
        <dbReference type="ChEBI" id="CHEBI:43474"/>
        <dbReference type="ChEBI" id="CHEBI:57701"/>
        <dbReference type="ChEBI" id="CHEBI:58702"/>
        <dbReference type="ChEBI" id="CHEBI:145989"/>
        <dbReference type="EC" id="2.5.1.19"/>
    </reaction>
    <physiologicalReaction direction="left-to-right" evidence="1">
        <dbReference type="Rhea" id="RHEA:21257"/>
    </physiologicalReaction>
</comment>
<comment type="pathway">
    <text evidence="1">Metabolic intermediate biosynthesis; chorismate biosynthesis; chorismate from D-erythrose 4-phosphate and phosphoenolpyruvate: step 6/7.</text>
</comment>
<comment type="subunit">
    <text evidence="1">Monomer.</text>
</comment>
<comment type="subcellular location">
    <subcellularLocation>
        <location evidence="1">Cytoplasm</location>
    </subcellularLocation>
</comment>
<comment type="similarity">
    <text evidence="1">Belongs to the EPSP synthase family.</text>
</comment>
<reference key="1">
    <citation type="submission" date="2009-07" db="EMBL/GenBank/DDBJ databases">
        <title>Complete sequence of Pectobacterium carotovorum subsp. carotovorum PC1.</title>
        <authorList>
            <consortium name="US DOE Joint Genome Institute"/>
            <person name="Lucas S."/>
            <person name="Copeland A."/>
            <person name="Lapidus A."/>
            <person name="Glavina del Rio T."/>
            <person name="Tice H."/>
            <person name="Bruce D."/>
            <person name="Goodwin L."/>
            <person name="Pitluck S."/>
            <person name="Munk A.C."/>
            <person name="Brettin T."/>
            <person name="Detter J.C."/>
            <person name="Han C."/>
            <person name="Tapia R."/>
            <person name="Larimer F."/>
            <person name="Land M."/>
            <person name="Hauser L."/>
            <person name="Kyrpides N."/>
            <person name="Mikhailova N."/>
            <person name="Balakrishnan V."/>
            <person name="Glasner J."/>
            <person name="Perna N.T."/>
        </authorList>
    </citation>
    <scope>NUCLEOTIDE SEQUENCE [LARGE SCALE GENOMIC DNA]</scope>
    <source>
        <strain>PC1</strain>
    </source>
</reference>
<feature type="chain" id="PRO_1000204168" description="3-phosphoshikimate 1-carboxyvinyltransferase">
    <location>
        <begin position="1"/>
        <end position="429"/>
    </location>
</feature>
<feature type="active site" description="Proton acceptor" evidence="1">
    <location>
        <position position="314"/>
    </location>
</feature>
<feature type="binding site" evidence="1">
    <location>
        <position position="23"/>
    </location>
    <ligand>
        <name>3-phosphoshikimate</name>
        <dbReference type="ChEBI" id="CHEBI:145989"/>
    </ligand>
</feature>
<feature type="binding site" evidence="1">
    <location>
        <position position="23"/>
    </location>
    <ligand>
        <name>phosphoenolpyruvate</name>
        <dbReference type="ChEBI" id="CHEBI:58702"/>
    </ligand>
</feature>
<feature type="binding site" evidence="1">
    <location>
        <position position="24"/>
    </location>
    <ligand>
        <name>3-phosphoshikimate</name>
        <dbReference type="ChEBI" id="CHEBI:145989"/>
    </ligand>
</feature>
<feature type="binding site" evidence="1">
    <location>
        <position position="28"/>
    </location>
    <ligand>
        <name>3-phosphoshikimate</name>
        <dbReference type="ChEBI" id="CHEBI:145989"/>
    </ligand>
</feature>
<feature type="binding site" evidence="1">
    <location>
        <position position="97"/>
    </location>
    <ligand>
        <name>phosphoenolpyruvate</name>
        <dbReference type="ChEBI" id="CHEBI:58702"/>
    </ligand>
</feature>
<feature type="binding site" evidence="1">
    <location>
        <position position="125"/>
    </location>
    <ligand>
        <name>phosphoenolpyruvate</name>
        <dbReference type="ChEBI" id="CHEBI:58702"/>
    </ligand>
</feature>
<feature type="binding site" evidence="1">
    <location>
        <position position="170"/>
    </location>
    <ligand>
        <name>3-phosphoshikimate</name>
        <dbReference type="ChEBI" id="CHEBI:145989"/>
    </ligand>
</feature>
<feature type="binding site" evidence="1">
    <location>
        <position position="171"/>
    </location>
    <ligand>
        <name>3-phosphoshikimate</name>
        <dbReference type="ChEBI" id="CHEBI:145989"/>
    </ligand>
</feature>
<feature type="binding site" evidence="1">
    <location>
        <position position="172"/>
    </location>
    <ligand>
        <name>3-phosphoshikimate</name>
        <dbReference type="ChEBI" id="CHEBI:145989"/>
    </ligand>
</feature>
<feature type="binding site" evidence="1">
    <location>
        <position position="172"/>
    </location>
    <ligand>
        <name>phosphoenolpyruvate</name>
        <dbReference type="ChEBI" id="CHEBI:58702"/>
    </ligand>
</feature>
<feature type="binding site" evidence="1">
    <location>
        <position position="198"/>
    </location>
    <ligand>
        <name>3-phosphoshikimate</name>
        <dbReference type="ChEBI" id="CHEBI:145989"/>
    </ligand>
</feature>
<feature type="binding site" evidence="1">
    <location>
        <position position="314"/>
    </location>
    <ligand>
        <name>3-phosphoshikimate</name>
        <dbReference type="ChEBI" id="CHEBI:145989"/>
    </ligand>
</feature>
<feature type="binding site" evidence="1">
    <location>
        <position position="338"/>
    </location>
    <ligand>
        <name>3-phosphoshikimate</name>
        <dbReference type="ChEBI" id="CHEBI:145989"/>
    </ligand>
</feature>
<feature type="binding site" evidence="1">
    <location>
        <position position="342"/>
    </location>
    <ligand>
        <name>3-phosphoshikimate</name>
        <dbReference type="ChEBI" id="CHEBI:145989"/>
    </ligand>
</feature>
<feature type="binding site" evidence="1">
    <location>
        <position position="346"/>
    </location>
    <ligand>
        <name>phosphoenolpyruvate</name>
        <dbReference type="ChEBI" id="CHEBI:58702"/>
    </ligand>
</feature>
<feature type="binding site" evidence="1">
    <location>
        <position position="388"/>
    </location>
    <ligand>
        <name>phosphoenolpyruvate</name>
        <dbReference type="ChEBI" id="CHEBI:58702"/>
    </ligand>
</feature>
<feature type="binding site" evidence="1">
    <location>
        <position position="413"/>
    </location>
    <ligand>
        <name>phosphoenolpyruvate</name>
        <dbReference type="ChEBI" id="CHEBI:58702"/>
    </ligand>
</feature>
<organism>
    <name type="scientific">Pectobacterium carotovorum subsp. carotovorum (strain PC1)</name>
    <dbReference type="NCBI Taxonomy" id="561230"/>
    <lineage>
        <taxon>Bacteria</taxon>
        <taxon>Pseudomonadati</taxon>
        <taxon>Pseudomonadota</taxon>
        <taxon>Gammaproteobacteria</taxon>
        <taxon>Enterobacterales</taxon>
        <taxon>Pectobacteriaceae</taxon>
        <taxon>Pectobacterium</taxon>
    </lineage>
</organism>
<evidence type="ECO:0000255" key="1">
    <source>
        <dbReference type="HAMAP-Rule" id="MF_00210"/>
    </source>
</evidence>
<gene>
    <name evidence="1" type="primary">aroA</name>
    <name type="ordered locus">PC1_1733</name>
</gene>